<proteinExistence type="evidence at protein level"/>
<name>C76K6_SALFT</name>
<evidence type="ECO:0000250" key="1">
    <source>
        <dbReference type="UniProtKB" id="A0A1D8QMG4"/>
    </source>
</evidence>
<evidence type="ECO:0000250" key="2">
    <source>
        <dbReference type="UniProtKB" id="Q94IP1"/>
    </source>
</evidence>
<evidence type="ECO:0000255" key="3"/>
<evidence type="ECO:0000269" key="4">
    <source>
    </source>
</evidence>
<evidence type="ECO:0000303" key="5">
    <source>
    </source>
</evidence>
<evidence type="ECO:0000305" key="6"/>
<evidence type="ECO:0000305" key="7">
    <source>
    </source>
</evidence>
<evidence type="ECO:0000305" key="8">
    <source>
    </source>
</evidence>
<comment type="function">
    <text evidence="1 4">Monooxygenase involved in the biosynthesis of carnosate, a potent antioxidant labdane-related diterpene natural product (By similarity). Catalyzes the oxidation of 11-hydroxyferruginol to produce carnosate (By similarity). Mediates the conversion of miltiradien into miltiradien-20-al (PubMed:27703160). Also involved in the production of pisiferic acid and derivative products from ferruginol (By similarity).</text>
</comment>
<comment type="catalytic activity">
    <reaction evidence="1">
        <text>11-hydroxyferruginol + 3 reduced [NADPH--hemoprotein reductase] + 3 O2 = carnosate + 3 oxidized [NADPH--hemoprotein reductase] + 4 H2O + 4 H(+)</text>
        <dbReference type="Rhea" id="RHEA:55432"/>
        <dbReference type="Rhea" id="RHEA-COMP:11964"/>
        <dbReference type="Rhea" id="RHEA-COMP:11965"/>
        <dbReference type="ChEBI" id="CHEBI:15377"/>
        <dbReference type="ChEBI" id="CHEBI:15378"/>
        <dbReference type="ChEBI" id="CHEBI:15379"/>
        <dbReference type="ChEBI" id="CHEBI:57618"/>
        <dbReference type="ChEBI" id="CHEBI:58210"/>
        <dbReference type="ChEBI" id="CHEBI:138942"/>
        <dbReference type="ChEBI" id="CHEBI:138943"/>
        <dbReference type="EC" id="1.14.14.61"/>
    </reaction>
    <physiologicalReaction direction="left-to-right" evidence="1">
        <dbReference type="Rhea" id="RHEA:55433"/>
    </physiologicalReaction>
</comment>
<comment type="catalytic activity">
    <reaction evidence="4">
        <text>miltiradiene + 2 reduced [NADPH--hemoprotein reductase] + 2 O2 = miltiradien-20-al + 2 oxidized [NADPH--hemoprotein reductase] + 3 H2O + 2 H(+)</text>
        <dbReference type="Rhea" id="RHEA:66800"/>
        <dbReference type="Rhea" id="RHEA-COMP:11964"/>
        <dbReference type="Rhea" id="RHEA-COMP:11965"/>
        <dbReference type="ChEBI" id="CHEBI:15377"/>
        <dbReference type="ChEBI" id="CHEBI:15378"/>
        <dbReference type="ChEBI" id="CHEBI:15379"/>
        <dbReference type="ChEBI" id="CHEBI:57618"/>
        <dbReference type="ChEBI" id="CHEBI:58210"/>
        <dbReference type="ChEBI" id="CHEBI:65037"/>
        <dbReference type="ChEBI" id="CHEBI:167488"/>
    </reaction>
    <physiologicalReaction direction="left-to-right" evidence="4">
        <dbReference type="Rhea" id="RHEA:66801"/>
    </physiologicalReaction>
</comment>
<comment type="catalytic activity">
    <reaction evidence="1">
        <text>ferruginol + 3 reduced [NADPH--hemoprotein reductase] + 3 O2 = pisiferate + 3 oxidized [NADPH--hemoprotein reductase] + 4 H2O + 4 H(+)</text>
        <dbReference type="Rhea" id="RHEA:66804"/>
        <dbReference type="Rhea" id="RHEA-COMP:11964"/>
        <dbReference type="Rhea" id="RHEA-COMP:11965"/>
        <dbReference type="ChEBI" id="CHEBI:15377"/>
        <dbReference type="ChEBI" id="CHEBI:15378"/>
        <dbReference type="ChEBI" id="CHEBI:15379"/>
        <dbReference type="ChEBI" id="CHEBI:57618"/>
        <dbReference type="ChEBI" id="CHEBI:58210"/>
        <dbReference type="ChEBI" id="CHEBI:78274"/>
        <dbReference type="ChEBI" id="CHEBI:167487"/>
    </reaction>
    <physiologicalReaction direction="left-to-right" evidence="1">
        <dbReference type="Rhea" id="RHEA:66805"/>
    </physiologicalReaction>
</comment>
<comment type="cofactor">
    <cofactor evidence="2">
        <name>heme</name>
        <dbReference type="ChEBI" id="CHEBI:30413"/>
    </cofactor>
</comment>
<comment type="pathway">
    <text evidence="8">Secondary metabolite biosynthesis; terpenoid biosynthesis.</text>
</comment>
<comment type="subcellular location">
    <subcellularLocation>
        <location evidence="3">Membrane</location>
        <topology evidence="3">Single-pass membrane protein</topology>
    </subcellularLocation>
</comment>
<comment type="tissue specificity">
    <text evidence="4">Mostly expressed in young leaves, particularly in glandular trichomes.</text>
</comment>
<comment type="similarity">
    <text evidence="6">Belongs to the cytochrome P450 family.</text>
</comment>
<dbReference type="EC" id="1.14.14.61" evidence="1"/>
<dbReference type="EC" id="1.14.14.-" evidence="4 1"/>
<dbReference type="EMBL" id="KX431218">
    <property type="protein sequence ID" value="AOW42544.1"/>
    <property type="molecule type" value="mRNA"/>
</dbReference>
<dbReference type="SMR" id="A0A1D8QMD1"/>
<dbReference type="KEGG" id="ag:AOW42544"/>
<dbReference type="UniPathway" id="UPA00213"/>
<dbReference type="GO" id="GO:0016020">
    <property type="term" value="C:membrane"/>
    <property type="evidence" value="ECO:0007669"/>
    <property type="project" value="UniProtKB-SubCell"/>
</dbReference>
<dbReference type="GO" id="GO:0020037">
    <property type="term" value="F:heme binding"/>
    <property type="evidence" value="ECO:0007669"/>
    <property type="project" value="InterPro"/>
</dbReference>
<dbReference type="GO" id="GO:0005506">
    <property type="term" value="F:iron ion binding"/>
    <property type="evidence" value="ECO:0007669"/>
    <property type="project" value="InterPro"/>
</dbReference>
<dbReference type="GO" id="GO:0016712">
    <property type="term" value="F:oxidoreductase activity, acting on paired donors, with incorporation or reduction of molecular oxygen, reduced flavin or flavoprotein as one donor, and incorporation of one atom of oxygen"/>
    <property type="evidence" value="ECO:0007669"/>
    <property type="project" value="UniProtKB-ARBA"/>
</dbReference>
<dbReference type="GO" id="GO:0016114">
    <property type="term" value="P:terpenoid biosynthetic process"/>
    <property type="evidence" value="ECO:0007669"/>
    <property type="project" value="UniProtKB-UniPathway"/>
</dbReference>
<dbReference type="CDD" id="cd11073">
    <property type="entry name" value="CYP76-like"/>
    <property type="match status" value="1"/>
</dbReference>
<dbReference type="FunFam" id="1.10.630.10:FF:000007">
    <property type="entry name" value="Cytochrome P450 76C4"/>
    <property type="match status" value="1"/>
</dbReference>
<dbReference type="Gene3D" id="1.10.630.10">
    <property type="entry name" value="Cytochrome P450"/>
    <property type="match status" value="1"/>
</dbReference>
<dbReference type="InterPro" id="IPR001128">
    <property type="entry name" value="Cyt_P450"/>
</dbReference>
<dbReference type="InterPro" id="IPR017972">
    <property type="entry name" value="Cyt_P450_CS"/>
</dbReference>
<dbReference type="InterPro" id="IPR002401">
    <property type="entry name" value="Cyt_P450_E_grp-I"/>
</dbReference>
<dbReference type="InterPro" id="IPR036396">
    <property type="entry name" value="Cyt_P450_sf"/>
</dbReference>
<dbReference type="PANTHER" id="PTHR47950">
    <property type="entry name" value="CYTOCHROME P450, FAMILY 76, SUBFAMILY C, POLYPEPTIDE 5-RELATED"/>
    <property type="match status" value="1"/>
</dbReference>
<dbReference type="PANTHER" id="PTHR47950:SF4">
    <property type="entry name" value="GERANIOL 8-HYDROXYLASE-LIKE"/>
    <property type="match status" value="1"/>
</dbReference>
<dbReference type="Pfam" id="PF00067">
    <property type="entry name" value="p450"/>
    <property type="match status" value="1"/>
</dbReference>
<dbReference type="PRINTS" id="PR00463">
    <property type="entry name" value="EP450I"/>
</dbReference>
<dbReference type="PRINTS" id="PR00385">
    <property type="entry name" value="P450"/>
</dbReference>
<dbReference type="SUPFAM" id="SSF48264">
    <property type="entry name" value="Cytochrome P450"/>
    <property type="match status" value="1"/>
</dbReference>
<dbReference type="PROSITE" id="PS00086">
    <property type="entry name" value="CYTOCHROME_P450"/>
    <property type="match status" value="1"/>
</dbReference>
<organism>
    <name type="scientific">Salvia fruticosa</name>
    <name type="common">Greek sage</name>
    <dbReference type="NCBI Taxonomy" id="268906"/>
    <lineage>
        <taxon>Eukaryota</taxon>
        <taxon>Viridiplantae</taxon>
        <taxon>Streptophyta</taxon>
        <taxon>Embryophyta</taxon>
        <taxon>Tracheophyta</taxon>
        <taxon>Spermatophyta</taxon>
        <taxon>Magnoliopsida</taxon>
        <taxon>eudicotyledons</taxon>
        <taxon>Gunneridae</taxon>
        <taxon>Pentapetalae</taxon>
        <taxon>asterids</taxon>
        <taxon>lamiids</taxon>
        <taxon>Lamiales</taxon>
        <taxon>Lamiaceae</taxon>
        <taxon>Nepetoideae</taxon>
        <taxon>Mentheae</taxon>
        <taxon>Salviinae</taxon>
        <taxon>Salvia</taxon>
        <taxon>Salvia incertae sedis</taxon>
    </lineage>
</organism>
<protein>
    <recommendedName>
        <fullName evidence="6">Carnosic acid synthase</fullName>
        <ecNumber evidence="1">1.14.14.61</ecNumber>
    </recommendedName>
    <alternativeName>
        <fullName evidence="5">Cytochrome P450 76AK6</fullName>
        <shortName evidence="5">SfCYP76AK6</shortName>
    </alternativeName>
    <alternativeName>
        <fullName evidence="7">Miltiradien-20-al synthase</fullName>
        <ecNumber evidence="4">1.14.14.-</ecNumber>
    </alternativeName>
    <alternativeName>
        <fullName evidence="7">Pisiferic acid synthase</fullName>
        <ecNumber evidence="1">1.14.14.-</ecNumber>
    </alternativeName>
</protein>
<gene>
    <name evidence="5" type="primary">CYP76AK6</name>
</gene>
<keyword id="KW-0349">Heme</keyword>
<keyword id="KW-0408">Iron</keyword>
<keyword id="KW-0472">Membrane</keyword>
<keyword id="KW-0479">Metal-binding</keyword>
<keyword id="KW-0503">Monooxygenase</keyword>
<keyword id="KW-0560">Oxidoreductase</keyword>
<keyword id="KW-0812">Transmembrane</keyword>
<keyword id="KW-1133">Transmembrane helix</keyword>
<accession>A0A1D8QMD1</accession>
<reference key="1">
    <citation type="journal article" date="2016" name="Nat. Commun.">
        <title>Elucidation of the biosynthesis of carnosic acid and its reconstitution in yeast.</title>
        <authorList>
            <person name="Scheler U."/>
            <person name="Brandt W."/>
            <person name="Porzel A."/>
            <person name="Rothe K."/>
            <person name="Manzano D."/>
            <person name="Bozic D."/>
            <person name="Papaefthimiou D."/>
            <person name="Balcke G.U."/>
            <person name="Henning A."/>
            <person name="Lohse S."/>
            <person name="Marillonnet S."/>
            <person name="Kanellis A.K."/>
            <person name="Ferrer A."/>
            <person name="Tissier A."/>
        </authorList>
    </citation>
    <scope>NUCLEOTIDE SEQUENCE [MRNA]</scope>
    <scope>FUNCTION</scope>
    <scope>CATALYTIC ACTIVITY</scope>
    <scope>TISSUE SPECIFICITY</scope>
</reference>
<reference key="2">
    <citation type="journal article" date="2019" name="Nat. Prod. Rep.">
        <title>Non-volatile natural products in plant glandular trichomes: chemistry, biological activities and biosynthesis.</title>
        <authorList>
            <person name="Liu Y."/>
            <person name="Jing S.-X."/>
            <person name="Luo S.-H."/>
            <person name="Li S.-H."/>
        </authorList>
    </citation>
    <scope>PATHWAY</scope>
    <scope>REVIEW</scope>
</reference>
<feature type="chain" id="PRO_5009111420" description="Carnosic acid synthase">
    <location>
        <begin position="1"/>
        <end position="500"/>
    </location>
</feature>
<feature type="transmembrane region" description="Helical" evidence="3">
    <location>
        <begin position="4"/>
        <end position="24"/>
    </location>
</feature>
<feature type="binding site" description="axial binding residue" evidence="2">
    <location>
        <position position="443"/>
    </location>
    <ligand>
        <name>heme</name>
        <dbReference type="ChEBI" id="CHEBI:30413"/>
    </ligand>
    <ligandPart>
        <name>Fe</name>
        <dbReference type="ChEBI" id="CHEBI:18248"/>
    </ligandPart>
</feature>
<sequence>MQVLILLSLAFLASCVVAYSRRRPGGRGAGNLPPGPPRLPIIGNMLQLGQNPHKSLAHLAKTYGPLMSLKLGNQFVVVVSSPEMAREVLQRHGLVFSTPCAPIAVQILGHGEVSMNMLPATSPIWKKLRKIAREKLFSNQALHDTRAVRWERLRKLADYVGRCSGAMNVGEATFTTMSNLMFSTLFSVEITQYADSDSDSGVNKKFREHVNAITRYIGVPNIADFFPIFAPFDPQGLRRKLTYHFGSLLELVQSLIEQRLRARNAATYRKKDDFLEMLLDLSEGDEYDLSVNEIKHLCVDLIIAGSDTSAATTEWAMVELLLHPDKLAKLKAELKSVVGDKSIIEESDISKLPYLQATVKEVLRYHPAAPLLAPHLAEEETQLNGYIIPKNTKIFINDWTISRDPSIWKNPEMFEPERFLDNDIDFCGQHFELIPFGSGRRICPGLPLASRMLHCMVATLCHNFDWELEKGTESKQLQREDVFGLALQKKIPLRAIPIKV</sequence>